<comment type="function">
    <text evidence="1">Component of the eukaryotic translation initiation factor 3 (eIF-3) complex, which is involved in protein synthesis of a specialized repertoire of mRNAs and, together with other initiation factors, stimulates binding of mRNA and methionyl-tRNAi to the 40S ribosome. The eIF-3 complex specifically targets and initiates translation of a subset of mRNAs involved in cell proliferation.</text>
</comment>
<comment type="subunit">
    <text evidence="1">Component of the eukaryotic translation initiation factor 3 (eIF-3) complex.</text>
</comment>
<comment type="subcellular location">
    <subcellularLocation>
        <location evidence="1">Cytoplasm</location>
    </subcellularLocation>
</comment>
<comment type="similarity">
    <text evidence="1">Belongs to the eIF-3 subunit E family.</text>
</comment>
<organism>
    <name type="scientific">Neurospora crassa (strain ATCC 24698 / 74-OR23-1A / CBS 708.71 / DSM 1257 / FGSC 987)</name>
    <dbReference type="NCBI Taxonomy" id="367110"/>
    <lineage>
        <taxon>Eukaryota</taxon>
        <taxon>Fungi</taxon>
        <taxon>Dikarya</taxon>
        <taxon>Ascomycota</taxon>
        <taxon>Pezizomycotina</taxon>
        <taxon>Sordariomycetes</taxon>
        <taxon>Sordariomycetidae</taxon>
        <taxon>Sordariales</taxon>
        <taxon>Sordariaceae</taxon>
        <taxon>Neurospora</taxon>
    </lineage>
</organism>
<reference key="1">
    <citation type="journal article" date="2003" name="Nature">
        <title>The genome sequence of the filamentous fungus Neurospora crassa.</title>
        <authorList>
            <person name="Galagan J.E."/>
            <person name="Calvo S.E."/>
            <person name="Borkovich K.A."/>
            <person name="Selker E.U."/>
            <person name="Read N.D."/>
            <person name="Jaffe D.B."/>
            <person name="FitzHugh W."/>
            <person name="Ma L.-J."/>
            <person name="Smirnov S."/>
            <person name="Purcell S."/>
            <person name="Rehman B."/>
            <person name="Elkins T."/>
            <person name="Engels R."/>
            <person name="Wang S."/>
            <person name="Nielsen C.B."/>
            <person name="Butler J."/>
            <person name="Endrizzi M."/>
            <person name="Qui D."/>
            <person name="Ianakiev P."/>
            <person name="Bell-Pedersen D."/>
            <person name="Nelson M.A."/>
            <person name="Werner-Washburne M."/>
            <person name="Selitrennikoff C.P."/>
            <person name="Kinsey J.A."/>
            <person name="Braun E.L."/>
            <person name="Zelter A."/>
            <person name="Schulte U."/>
            <person name="Kothe G.O."/>
            <person name="Jedd G."/>
            <person name="Mewes H.-W."/>
            <person name="Staben C."/>
            <person name="Marcotte E."/>
            <person name="Greenberg D."/>
            <person name="Roy A."/>
            <person name="Foley K."/>
            <person name="Naylor J."/>
            <person name="Stange-Thomann N."/>
            <person name="Barrett R."/>
            <person name="Gnerre S."/>
            <person name="Kamal M."/>
            <person name="Kamvysselis M."/>
            <person name="Mauceli E.W."/>
            <person name="Bielke C."/>
            <person name="Rudd S."/>
            <person name="Frishman D."/>
            <person name="Krystofova S."/>
            <person name="Rasmussen C."/>
            <person name="Metzenberg R.L."/>
            <person name="Perkins D.D."/>
            <person name="Kroken S."/>
            <person name="Cogoni C."/>
            <person name="Macino G."/>
            <person name="Catcheside D.E.A."/>
            <person name="Li W."/>
            <person name="Pratt R.J."/>
            <person name="Osmani S.A."/>
            <person name="DeSouza C.P.C."/>
            <person name="Glass N.L."/>
            <person name="Orbach M.J."/>
            <person name="Berglund J.A."/>
            <person name="Voelker R."/>
            <person name="Yarden O."/>
            <person name="Plamann M."/>
            <person name="Seiler S."/>
            <person name="Dunlap J.C."/>
            <person name="Radford A."/>
            <person name="Aramayo R."/>
            <person name="Natvig D.O."/>
            <person name="Alex L.A."/>
            <person name="Mannhaupt G."/>
            <person name="Ebbole D.J."/>
            <person name="Freitag M."/>
            <person name="Paulsen I."/>
            <person name="Sachs M.S."/>
            <person name="Lander E.S."/>
            <person name="Nusbaum C."/>
            <person name="Birren B.W."/>
        </authorList>
    </citation>
    <scope>NUCLEOTIDE SEQUENCE [LARGE SCALE GENOMIC DNA]</scope>
    <source>
        <strain>ATCC 24698 / 74-OR23-1A / CBS 708.71 / DSM 1257 / FGSC 987</strain>
    </source>
</reference>
<protein>
    <recommendedName>
        <fullName evidence="1">Eukaryotic translation initiation factor 3 subunit E</fullName>
        <shortName evidence="1">eIF3e</shortName>
    </recommendedName>
</protein>
<proteinExistence type="inferred from homology"/>
<sequence length="443" mass="51050">MASTSPATTNGDVAPANYDLVLKLAPHLDRHMIFPLLEFNAGRLKEDETDKAREILAAKYALLKKTNMTDYVANLYCELEGLKEPPAEYAERRQKVFHQLEKYEQETAKITELLQRDDVVNNLRSDKVANLEFLKKEHDVTIDMVNALYDFGQLQYSCGNYADASELLYRFRVLSTDNDKVSYATWGRLACEILTMNWESAMEELQKVRESIDTRLANNPLAQLQHRTELVHWALFPLFNYDKAREPLLDLFFNAGFINTIQANSPWILRYLTVAVITNRGRAKNAGVHQKQMKDVVRIVKQEAYEYQDPITRFVHALCIDFDFEEAQQQLVLAEEVLRSDFFLLAHADDFVDSARHLIFESYCKIHARISLKDLSARLGLNNDDAEKWIVNLIRDTRLDAKIDYKEGTVVMNHPPSSVYQQVIERTKGGFFRTQVLTAAVAR</sequence>
<gene>
    <name type="primary">int-6</name>
    <name type="ORF">NCU05889</name>
</gene>
<feature type="chain" id="PRO_0000365990" description="Eukaryotic translation initiation factor 3 subunit E">
    <location>
        <begin position="1"/>
        <end position="443"/>
    </location>
</feature>
<feature type="domain" description="PCI" evidence="2">
    <location>
        <begin position="249"/>
        <end position="417"/>
    </location>
</feature>
<accession>Q7S519</accession>
<name>EIF3E_NEUCR</name>
<keyword id="KW-0963">Cytoplasm</keyword>
<keyword id="KW-0396">Initiation factor</keyword>
<keyword id="KW-0648">Protein biosynthesis</keyword>
<keyword id="KW-1185">Reference proteome</keyword>
<dbReference type="EMBL" id="CM002242">
    <property type="protein sequence ID" value="EAA30644.1"/>
    <property type="molecule type" value="Genomic_DNA"/>
</dbReference>
<dbReference type="RefSeq" id="XP_959880.1">
    <property type="nucleotide sequence ID" value="XM_954787.3"/>
</dbReference>
<dbReference type="SMR" id="Q7S519"/>
<dbReference type="STRING" id="367110.Q7S519"/>
<dbReference type="PaxDb" id="5141-EFNCRP00000005737"/>
<dbReference type="EnsemblFungi" id="EAA30644">
    <property type="protein sequence ID" value="EAA30644"/>
    <property type="gene ID" value="NCU05889"/>
</dbReference>
<dbReference type="GeneID" id="3875986"/>
<dbReference type="KEGG" id="ncr:NCU05889"/>
<dbReference type="VEuPathDB" id="FungiDB:NCU05889"/>
<dbReference type="HOGENOM" id="CLU_031132_0_0_1"/>
<dbReference type="InParanoid" id="Q7S519"/>
<dbReference type="OMA" id="NCPWILR"/>
<dbReference type="OrthoDB" id="417252at2759"/>
<dbReference type="Proteomes" id="UP000001805">
    <property type="component" value="Chromosome 7, Linkage Group VII"/>
</dbReference>
<dbReference type="GO" id="GO:0016282">
    <property type="term" value="C:eukaryotic 43S preinitiation complex"/>
    <property type="evidence" value="ECO:0007669"/>
    <property type="project" value="UniProtKB-UniRule"/>
</dbReference>
<dbReference type="GO" id="GO:0033290">
    <property type="term" value="C:eukaryotic 48S preinitiation complex"/>
    <property type="evidence" value="ECO:0007669"/>
    <property type="project" value="UniProtKB-UniRule"/>
</dbReference>
<dbReference type="GO" id="GO:0005852">
    <property type="term" value="C:eukaryotic translation initiation factor 3 complex"/>
    <property type="evidence" value="ECO:0000318"/>
    <property type="project" value="GO_Central"/>
</dbReference>
<dbReference type="GO" id="GO:0071540">
    <property type="term" value="C:eukaryotic translation initiation factor 3 complex, eIF3e"/>
    <property type="evidence" value="ECO:0007669"/>
    <property type="project" value="UniProtKB-UniRule"/>
</dbReference>
<dbReference type="GO" id="GO:0005634">
    <property type="term" value="C:nucleus"/>
    <property type="evidence" value="ECO:0000318"/>
    <property type="project" value="GO_Central"/>
</dbReference>
<dbReference type="GO" id="GO:0003743">
    <property type="term" value="F:translation initiation factor activity"/>
    <property type="evidence" value="ECO:0007669"/>
    <property type="project" value="UniProtKB-UniRule"/>
</dbReference>
<dbReference type="GO" id="GO:0001732">
    <property type="term" value="P:formation of cytoplasmic translation initiation complex"/>
    <property type="evidence" value="ECO:0007669"/>
    <property type="project" value="UniProtKB-UniRule"/>
</dbReference>
<dbReference type="GO" id="GO:0006413">
    <property type="term" value="P:translational initiation"/>
    <property type="evidence" value="ECO:0000318"/>
    <property type="project" value="GO_Central"/>
</dbReference>
<dbReference type="CDD" id="cd21378">
    <property type="entry name" value="eIF3E"/>
    <property type="match status" value="1"/>
</dbReference>
<dbReference type="Gene3D" id="1.25.40.570">
    <property type="match status" value="1"/>
</dbReference>
<dbReference type="HAMAP" id="MF_03004">
    <property type="entry name" value="eIF3e"/>
    <property type="match status" value="1"/>
</dbReference>
<dbReference type="InterPro" id="IPR016650">
    <property type="entry name" value="eIF3e"/>
</dbReference>
<dbReference type="InterPro" id="IPR019010">
    <property type="entry name" value="eIF3e_N"/>
</dbReference>
<dbReference type="InterPro" id="IPR000717">
    <property type="entry name" value="PCI_dom"/>
</dbReference>
<dbReference type="InterPro" id="IPR036390">
    <property type="entry name" value="WH_DNA-bd_sf"/>
</dbReference>
<dbReference type="PANTHER" id="PTHR10317">
    <property type="entry name" value="EUKARYOTIC TRANSLATION INITIATION FACTOR 3 SUBUNIT E"/>
    <property type="match status" value="1"/>
</dbReference>
<dbReference type="Pfam" id="PF09440">
    <property type="entry name" value="eIF3_N"/>
    <property type="match status" value="1"/>
</dbReference>
<dbReference type="Pfam" id="PF21357">
    <property type="entry name" value="EIF3E_C"/>
    <property type="match status" value="1"/>
</dbReference>
<dbReference type="Pfam" id="PF01399">
    <property type="entry name" value="PCI"/>
    <property type="match status" value="1"/>
</dbReference>
<dbReference type="PIRSF" id="PIRSF016255">
    <property type="entry name" value="eIF3e_su6"/>
    <property type="match status" value="1"/>
</dbReference>
<dbReference type="SMART" id="SM01186">
    <property type="entry name" value="eIF3_N"/>
    <property type="match status" value="1"/>
</dbReference>
<dbReference type="SMART" id="SM00088">
    <property type="entry name" value="PINT"/>
    <property type="match status" value="1"/>
</dbReference>
<dbReference type="SUPFAM" id="SSF46785">
    <property type="entry name" value="Winged helix' DNA-binding domain"/>
    <property type="match status" value="1"/>
</dbReference>
<dbReference type="PROSITE" id="PS50250">
    <property type="entry name" value="PCI"/>
    <property type="match status" value="1"/>
</dbReference>
<evidence type="ECO:0000255" key="1">
    <source>
        <dbReference type="HAMAP-Rule" id="MF_03004"/>
    </source>
</evidence>
<evidence type="ECO:0000255" key="2">
    <source>
        <dbReference type="PROSITE-ProRule" id="PRU01185"/>
    </source>
</evidence>